<accession>P63821</accession>
<accession>P58104</accession>
<accession>Q48XP0</accession>
<name>COAD_STRP1</name>
<gene>
    <name evidence="1" type="primary">coaD</name>
    <name type="synonym">kdtB</name>
    <name type="ordered locus">SPy_1537</name>
    <name type="ordered locus">M5005_Spy1267</name>
</gene>
<organism>
    <name type="scientific">Streptococcus pyogenes serotype M1</name>
    <dbReference type="NCBI Taxonomy" id="301447"/>
    <lineage>
        <taxon>Bacteria</taxon>
        <taxon>Bacillati</taxon>
        <taxon>Bacillota</taxon>
        <taxon>Bacilli</taxon>
        <taxon>Lactobacillales</taxon>
        <taxon>Streptococcaceae</taxon>
        <taxon>Streptococcus</taxon>
    </lineage>
</organism>
<comment type="function">
    <text evidence="1">Reversibly transfers an adenylyl group from ATP to 4'-phosphopantetheine, yielding dephospho-CoA (dPCoA) and pyrophosphate.</text>
</comment>
<comment type="catalytic activity">
    <reaction evidence="1">
        <text>(R)-4'-phosphopantetheine + ATP + H(+) = 3'-dephospho-CoA + diphosphate</text>
        <dbReference type="Rhea" id="RHEA:19801"/>
        <dbReference type="ChEBI" id="CHEBI:15378"/>
        <dbReference type="ChEBI" id="CHEBI:30616"/>
        <dbReference type="ChEBI" id="CHEBI:33019"/>
        <dbReference type="ChEBI" id="CHEBI:57328"/>
        <dbReference type="ChEBI" id="CHEBI:61723"/>
        <dbReference type="EC" id="2.7.7.3"/>
    </reaction>
</comment>
<comment type="cofactor">
    <cofactor evidence="1">
        <name>Mg(2+)</name>
        <dbReference type="ChEBI" id="CHEBI:18420"/>
    </cofactor>
</comment>
<comment type="pathway">
    <text evidence="1">Cofactor biosynthesis; coenzyme A biosynthesis; CoA from (R)-pantothenate: step 4/5.</text>
</comment>
<comment type="subunit">
    <text evidence="1">Homohexamer.</text>
</comment>
<comment type="subcellular location">
    <subcellularLocation>
        <location evidence="1">Cytoplasm</location>
    </subcellularLocation>
</comment>
<comment type="similarity">
    <text evidence="1">Belongs to the bacterial CoaD family.</text>
</comment>
<sequence>MLTKIGLYTGSFDPVTNGHLDIVKRASGLFDQIYVGIFDNPTKKSYFKLEVRKAMLTQALADFTNVIVVTSHERLAIDVAKELRVTHLIRGLRNATDFEYEENLEYFNHLLAPNIETVYLISRNKWQALSSSRVRELIHFQSSLEGLVPQSVIAQVEKMNEKT</sequence>
<feature type="chain" id="PRO_0000156286" description="Phosphopantetheine adenylyltransferase">
    <location>
        <begin position="1"/>
        <end position="163"/>
    </location>
</feature>
<feature type="binding site" evidence="1">
    <location>
        <begin position="11"/>
        <end position="12"/>
    </location>
    <ligand>
        <name>ATP</name>
        <dbReference type="ChEBI" id="CHEBI:30616"/>
    </ligand>
</feature>
<feature type="binding site" evidence="1">
    <location>
        <position position="11"/>
    </location>
    <ligand>
        <name>substrate</name>
    </ligand>
</feature>
<feature type="binding site" evidence="1">
    <location>
        <position position="19"/>
    </location>
    <ligand>
        <name>ATP</name>
        <dbReference type="ChEBI" id="CHEBI:30616"/>
    </ligand>
</feature>
<feature type="binding site" evidence="1">
    <location>
        <position position="43"/>
    </location>
    <ligand>
        <name>substrate</name>
    </ligand>
</feature>
<feature type="binding site" evidence="1">
    <location>
        <position position="76"/>
    </location>
    <ligand>
        <name>substrate</name>
    </ligand>
</feature>
<feature type="binding site" evidence="1">
    <location>
        <position position="90"/>
    </location>
    <ligand>
        <name>substrate</name>
    </ligand>
</feature>
<feature type="binding site" evidence="1">
    <location>
        <begin position="91"/>
        <end position="93"/>
    </location>
    <ligand>
        <name>ATP</name>
        <dbReference type="ChEBI" id="CHEBI:30616"/>
    </ligand>
</feature>
<feature type="binding site" evidence="1">
    <location>
        <position position="101"/>
    </location>
    <ligand>
        <name>ATP</name>
        <dbReference type="ChEBI" id="CHEBI:30616"/>
    </ligand>
</feature>
<feature type="binding site" evidence="1">
    <location>
        <begin position="126"/>
        <end position="132"/>
    </location>
    <ligand>
        <name>ATP</name>
        <dbReference type="ChEBI" id="CHEBI:30616"/>
    </ligand>
</feature>
<feature type="site" description="Transition state stabilizer" evidence="1">
    <location>
        <position position="19"/>
    </location>
</feature>
<dbReference type="EC" id="2.7.7.3" evidence="1"/>
<dbReference type="EMBL" id="AE004092">
    <property type="protein sequence ID" value="AAK34331.1"/>
    <property type="molecule type" value="Genomic_DNA"/>
</dbReference>
<dbReference type="EMBL" id="CP000017">
    <property type="protein sequence ID" value="AAZ51885.1"/>
    <property type="molecule type" value="Genomic_DNA"/>
</dbReference>
<dbReference type="RefSeq" id="NP_269610.1">
    <property type="nucleotide sequence ID" value="NC_002737.2"/>
</dbReference>
<dbReference type="SMR" id="P63821"/>
<dbReference type="PaxDb" id="1314-HKU360_01308"/>
<dbReference type="KEGG" id="spy:SPy_1537"/>
<dbReference type="KEGG" id="spz:M5005_Spy1267"/>
<dbReference type="PATRIC" id="fig|160490.10.peg.1344"/>
<dbReference type="HOGENOM" id="CLU_100149_0_1_9"/>
<dbReference type="OMA" id="MALMNRK"/>
<dbReference type="UniPathway" id="UPA00241">
    <property type="reaction ID" value="UER00355"/>
</dbReference>
<dbReference type="Proteomes" id="UP000000750">
    <property type="component" value="Chromosome"/>
</dbReference>
<dbReference type="GO" id="GO:0005737">
    <property type="term" value="C:cytoplasm"/>
    <property type="evidence" value="ECO:0007669"/>
    <property type="project" value="UniProtKB-SubCell"/>
</dbReference>
<dbReference type="GO" id="GO:0005524">
    <property type="term" value="F:ATP binding"/>
    <property type="evidence" value="ECO:0007669"/>
    <property type="project" value="UniProtKB-KW"/>
</dbReference>
<dbReference type="GO" id="GO:0004595">
    <property type="term" value="F:pantetheine-phosphate adenylyltransferase activity"/>
    <property type="evidence" value="ECO:0007669"/>
    <property type="project" value="UniProtKB-UniRule"/>
</dbReference>
<dbReference type="GO" id="GO:0015937">
    <property type="term" value="P:coenzyme A biosynthetic process"/>
    <property type="evidence" value="ECO:0007669"/>
    <property type="project" value="UniProtKB-UniRule"/>
</dbReference>
<dbReference type="CDD" id="cd02163">
    <property type="entry name" value="PPAT"/>
    <property type="match status" value="1"/>
</dbReference>
<dbReference type="Gene3D" id="3.40.50.620">
    <property type="entry name" value="HUPs"/>
    <property type="match status" value="1"/>
</dbReference>
<dbReference type="HAMAP" id="MF_00151">
    <property type="entry name" value="PPAT_bact"/>
    <property type="match status" value="1"/>
</dbReference>
<dbReference type="InterPro" id="IPR004821">
    <property type="entry name" value="Cyt_trans-like"/>
</dbReference>
<dbReference type="InterPro" id="IPR001980">
    <property type="entry name" value="PPAT"/>
</dbReference>
<dbReference type="InterPro" id="IPR014729">
    <property type="entry name" value="Rossmann-like_a/b/a_fold"/>
</dbReference>
<dbReference type="NCBIfam" id="TIGR01510">
    <property type="entry name" value="coaD_prev_kdtB"/>
    <property type="match status" value="1"/>
</dbReference>
<dbReference type="NCBIfam" id="TIGR00125">
    <property type="entry name" value="cyt_tran_rel"/>
    <property type="match status" value="1"/>
</dbReference>
<dbReference type="PANTHER" id="PTHR21342">
    <property type="entry name" value="PHOSPHOPANTETHEINE ADENYLYLTRANSFERASE"/>
    <property type="match status" value="1"/>
</dbReference>
<dbReference type="PANTHER" id="PTHR21342:SF1">
    <property type="entry name" value="PHOSPHOPANTETHEINE ADENYLYLTRANSFERASE"/>
    <property type="match status" value="1"/>
</dbReference>
<dbReference type="Pfam" id="PF01467">
    <property type="entry name" value="CTP_transf_like"/>
    <property type="match status" value="1"/>
</dbReference>
<dbReference type="PRINTS" id="PR01020">
    <property type="entry name" value="LPSBIOSNTHSS"/>
</dbReference>
<dbReference type="SUPFAM" id="SSF52374">
    <property type="entry name" value="Nucleotidylyl transferase"/>
    <property type="match status" value="1"/>
</dbReference>
<proteinExistence type="inferred from homology"/>
<protein>
    <recommendedName>
        <fullName evidence="1">Phosphopantetheine adenylyltransferase</fullName>
        <ecNumber evidence="1">2.7.7.3</ecNumber>
    </recommendedName>
    <alternativeName>
        <fullName evidence="1">Dephospho-CoA pyrophosphorylase</fullName>
    </alternativeName>
    <alternativeName>
        <fullName evidence="1">Pantetheine-phosphate adenylyltransferase</fullName>
        <shortName evidence="1">PPAT</shortName>
    </alternativeName>
</protein>
<keyword id="KW-0067">ATP-binding</keyword>
<keyword id="KW-0173">Coenzyme A biosynthesis</keyword>
<keyword id="KW-0963">Cytoplasm</keyword>
<keyword id="KW-0460">Magnesium</keyword>
<keyword id="KW-0547">Nucleotide-binding</keyword>
<keyword id="KW-0548">Nucleotidyltransferase</keyword>
<keyword id="KW-1185">Reference proteome</keyword>
<keyword id="KW-0808">Transferase</keyword>
<evidence type="ECO:0000255" key="1">
    <source>
        <dbReference type="HAMAP-Rule" id="MF_00151"/>
    </source>
</evidence>
<reference key="1">
    <citation type="journal article" date="2001" name="Proc. Natl. Acad. Sci. U.S.A.">
        <title>Complete genome sequence of an M1 strain of Streptococcus pyogenes.</title>
        <authorList>
            <person name="Ferretti J.J."/>
            <person name="McShan W.M."/>
            <person name="Ajdic D.J."/>
            <person name="Savic D.J."/>
            <person name="Savic G."/>
            <person name="Lyon K."/>
            <person name="Primeaux C."/>
            <person name="Sezate S."/>
            <person name="Suvorov A.N."/>
            <person name="Kenton S."/>
            <person name="Lai H.S."/>
            <person name="Lin S.P."/>
            <person name="Qian Y."/>
            <person name="Jia H.G."/>
            <person name="Najar F.Z."/>
            <person name="Ren Q."/>
            <person name="Zhu H."/>
            <person name="Song L."/>
            <person name="White J."/>
            <person name="Yuan X."/>
            <person name="Clifton S.W."/>
            <person name="Roe B.A."/>
            <person name="McLaughlin R.E."/>
        </authorList>
    </citation>
    <scope>NUCLEOTIDE SEQUENCE [LARGE SCALE GENOMIC DNA]</scope>
    <source>
        <strain>ATCC 700294 / SF370 / Serotype M1</strain>
    </source>
</reference>
<reference key="2">
    <citation type="journal article" date="2005" name="J. Infect. Dis.">
        <title>Evolutionary origin and emergence of a highly successful clone of serotype M1 group A Streptococcus involved multiple horizontal gene transfer events.</title>
        <authorList>
            <person name="Sumby P."/>
            <person name="Porcella S.F."/>
            <person name="Madrigal A.G."/>
            <person name="Barbian K.D."/>
            <person name="Virtaneva K."/>
            <person name="Ricklefs S.M."/>
            <person name="Sturdevant D.E."/>
            <person name="Graham M.R."/>
            <person name="Vuopio-Varkila J."/>
            <person name="Hoe N.P."/>
            <person name="Musser J.M."/>
        </authorList>
    </citation>
    <scope>NUCLEOTIDE SEQUENCE [LARGE SCALE GENOMIC DNA]</scope>
    <source>
        <strain>ATCC BAA-947 / MGAS5005 / Serotype M1</strain>
    </source>
</reference>